<name>RS6_LEPIC</name>
<gene>
    <name evidence="1" type="primary">rpsF</name>
    <name type="ordered locus">LIC_12113</name>
</gene>
<sequence>MRNYELTTITRVSSREVAKSEIQETLKKHSVSVTAEEDWGQRKLWHPIKHEEQGIFHHYKCSADPNAIEKVEKEFLINQNILRSMVVRLHG</sequence>
<feature type="chain" id="PRO_0000176786" description="Small ribosomal subunit protein bS6">
    <location>
        <begin position="1"/>
        <end position="91"/>
    </location>
</feature>
<dbReference type="EMBL" id="AE016823">
    <property type="protein sequence ID" value="AAS70684.1"/>
    <property type="molecule type" value="Genomic_DNA"/>
</dbReference>
<dbReference type="RefSeq" id="WP_001246923.1">
    <property type="nucleotide sequence ID" value="NC_005823.1"/>
</dbReference>
<dbReference type="SMR" id="Q72QK0"/>
<dbReference type="GeneID" id="61141998"/>
<dbReference type="KEGG" id="lic:LIC_12113"/>
<dbReference type="HOGENOM" id="CLU_113441_5_1_12"/>
<dbReference type="Proteomes" id="UP000007037">
    <property type="component" value="Chromosome I"/>
</dbReference>
<dbReference type="GO" id="GO:1990904">
    <property type="term" value="C:ribonucleoprotein complex"/>
    <property type="evidence" value="ECO:0007669"/>
    <property type="project" value="UniProtKB-KW"/>
</dbReference>
<dbReference type="GO" id="GO:0005840">
    <property type="term" value="C:ribosome"/>
    <property type="evidence" value="ECO:0007669"/>
    <property type="project" value="UniProtKB-KW"/>
</dbReference>
<dbReference type="GO" id="GO:0019843">
    <property type="term" value="F:rRNA binding"/>
    <property type="evidence" value="ECO:0007669"/>
    <property type="project" value="UniProtKB-UniRule"/>
</dbReference>
<dbReference type="GO" id="GO:0003735">
    <property type="term" value="F:structural constituent of ribosome"/>
    <property type="evidence" value="ECO:0007669"/>
    <property type="project" value="InterPro"/>
</dbReference>
<dbReference type="GO" id="GO:0006412">
    <property type="term" value="P:translation"/>
    <property type="evidence" value="ECO:0007669"/>
    <property type="project" value="UniProtKB-UniRule"/>
</dbReference>
<dbReference type="CDD" id="cd00473">
    <property type="entry name" value="bS6"/>
    <property type="match status" value="1"/>
</dbReference>
<dbReference type="FunFam" id="3.30.70.60:FF:000009">
    <property type="entry name" value="30S ribosomal protein S6"/>
    <property type="match status" value="1"/>
</dbReference>
<dbReference type="Gene3D" id="3.30.70.60">
    <property type="match status" value="1"/>
</dbReference>
<dbReference type="HAMAP" id="MF_00360">
    <property type="entry name" value="Ribosomal_bS6"/>
    <property type="match status" value="1"/>
</dbReference>
<dbReference type="InterPro" id="IPR000529">
    <property type="entry name" value="Ribosomal_bS6"/>
</dbReference>
<dbReference type="InterPro" id="IPR035980">
    <property type="entry name" value="Ribosomal_bS6_sf"/>
</dbReference>
<dbReference type="InterPro" id="IPR020814">
    <property type="entry name" value="Ribosomal_S6_plastid/chlpt"/>
</dbReference>
<dbReference type="InterPro" id="IPR014717">
    <property type="entry name" value="Transl_elong_EF1B/ribsomal_bS6"/>
</dbReference>
<dbReference type="NCBIfam" id="TIGR00166">
    <property type="entry name" value="S6"/>
    <property type="match status" value="1"/>
</dbReference>
<dbReference type="Pfam" id="PF01250">
    <property type="entry name" value="Ribosomal_S6"/>
    <property type="match status" value="1"/>
</dbReference>
<dbReference type="SUPFAM" id="SSF54995">
    <property type="entry name" value="Ribosomal protein S6"/>
    <property type="match status" value="1"/>
</dbReference>
<proteinExistence type="inferred from homology"/>
<organism>
    <name type="scientific">Leptospira interrogans serogroup Icterohaemorrhagiae serovar copenhageni (strain Fiocruz L1-130)</name>
    <dbReference type="NCBI Taxonomy" id="267671"/>
    <lineage>
        <taxon>Bacteria</taxon>
        <taxon>Pseudomonadati</taxon>
        <taxon>Spirochaetota</taxon>
        <taxon>Spirochaetia</taxon>
        <taxon>Leptospirales</taxon>
        <taxon>Leptospiraceae</taxon>
        <taxon>Leptospira</taxon>
    </lineage>
</organism>
<keyword id="KW-0687">Ribonucleoprotein</keyword>
<keyword id="KW-0689">Ribosomal protein</keyword>
<keyword id="KW-0694">RNA-binding</keyword>
<keyword id="KW-0699">rRNA-binding</keyword>
<reference key="1">
    <citation type="journal article" date="2004" name="J. Bacteriol.">
        <title>Comparative genomics of two Leptospira interrogans serovars reveals novel insights into physiology and pathogenesis.</title>
        <authorList>
            <person name="Nascimento A.L.T.O."/>
            <person name="Ko A.I."/>
            <person name="Martins E.A.L."/>
            <person name="Monteiro-Vitorello C.B."/>
            <person name="Ho P.L."/>
            <person name="Haake D.A."/>
            <person name="Verjovski-Almeida S."/>
            <person name="Hartskeerl R.A."/>
            <person name="Marques M.V."/>
            <person name="Oliveira M.C."/>
            <person name="Menck C.F.M."/>
            <person name="Leite L.C.C."/>
            <person name="Carrer H."/>
            <person name="Coutinho L.L."/>
            <person name="Degrave W.M."/>
            <person name="Dellagostin O.A."/>
            <person name="El-Dorry H."/>
            <person name="Ferro E.S."/>
            <person name="Ferro M.I.T."/>
            <person name="Furlan L.R."/>
            <person name="Gamberini M."/>
            <person name="Giglioti E.A."/>
            <person name="Goes-Neto A."/>
            <person name="Goldman G.H."/>
            <person name="Goldman M.H.S."/>
            <person name="Harakava R."/>
            <person name="Jeronimo S.M.B."/>
            <person name="Junqueira-de-Azevedo I.L.M."/>
            <person name="Kimura E.T."/>
            <person name="Kuramae E.E."/>
            <person name="Lemos E.G.M."/>
            <person name="Lemos M.V.F."/>
            <person name="Marino C.L."/>
            <person name="Nunes L.R."/>
            <person name="de Oliveira R.C."/>
            <person name="Pereira G.G."/>
            <person name="Reis M.S."/>
            <person name="Schriefer A."/>
            <person name="Siqueira W.J."/>
            <person name="Sommer P."/>
            <person name="Tsai S.M."/>
            <person name="Simpson A.J.G."/>
            <person name="Ferro J.A."/>
            <person name="Camargo L.E.A."/>
            <person name="Kitajima J.P."/>
            <person name="Setubal J.C."/>
            <person name="Van Sluys M.A."/>
        </authorList>
    </citation>
    <scope>NUCLEOTIDE SEQUENCE [LARGE SCALE GENOMIC DNA]</scope>
    <source>
        <strain>Fiocruz L1-130</strain>
    </source>
</reference>
<protein>
    <recommendedName>
        <fullName evidence="1">Small ribosomal subunit protein bS6</fullName>
    </recommendedName>
    <alternativeName>
        <fullName evidence="2">30S ribosomal protein S6</fullName>
    </alternativeName>
</protein>
<comment type="function">
    <text evidence="1">Binds together with bS18 to 16S ribosomal RNA.</text>
</comment>
<comment type="similarity">
    <text evidence="1">Belongs to the bacterial ribosomal protein bS6 family.</text>
</comment>
<accession>Q72QK0</accession>
<evidence type="ECO:0000255" key="1">
    <source>
        <dbReference type="HAMAP-Rule" id="MF_00360"/>
    </source>
</evidence>
<evidence type="ECO:0000305" key="2"/>